<sequence>MTIWVDADACPNVIKEILYRAAERMQMPLVLVANQSLRVPPSRFIRTLRVAAGFDVADNEIVRQCEAGDLVITADIPLAAEAIEKGAAALNPRGERYTPATIRERLTMRDFMDTLRASGIQTGGPDSLSQRDRQAFAAELEKWWLEVQRSRG</sequence>
<reference key="1">
    <citation type="journal article" date="2007" name="J. Bacteriol.">
        <title>The genome sequence of avian pathogenic Escherichia coli strain O1:K1:H7 shares strong similarities with human extraintestinal pathogenic E. coli genomes.</title>
        <authorList>
            <person name="Johnson T.J."/>
            <person name="Kariyawasam S."/>
            <person name="Wannemuehler Y."/>
            <person name="Mangiamele P."/>
            <person name="Johnson S.J."/>
            <person name="Doetkott C."/>
            <person name="Skyberg J.A."/>
            <person name="Lynne A.M."/>
            <person name="Johnson J.R."/>
            <person name="Nolan L.K."/>
        </authorList>
    </citation>
    <scope>NUCLEOTIDE SEQUENCE [LARGE SCALE GENOMIC DNA]</scope>
</reference>
<proteinExistence type="inferred from homology"/>
<feature type="chain" id="PRO_1000014419" description="UPF0178 protein YaiI">
    <location>
        <begin position="1"/>
        <end position="152"/>
    </location>
</feature>
<comment type="similarity">
    <text evidence="1">Belongs to the UPF0178 family.</text>
</comment>
<dbReference type="EMBL" id="CP000468">
    <property type="protein sequence ID" value="ABI99848.1"/>
    <property type="molecule type" value="Genomic_DNA"/>
</dbReference>
<dbReference type="RefSeq" id="WP_000158159.1">
    <property type="nucleotide sequence ID" value="NZ_CADILS010000009.1"/>
</dbReference>
<dbReference type="KEGG" id="ecv:APECO1_1621"/>
<dbReference type="HOGENOM" id="CLU_106619_2_1_6"/>
<dbReference type="Proteomes" id="UP000008216">
    <property type="component" value="Chromosome"/>
</dbReference>
<dbReference type="CDD" id="cd18720">
    <property type="entry name" value="PIN_YqxD-like"/>
    <property type="match status" value="1"/>
</dbReference>
<dbReference type="HAMAP" id="MF_00489">
    <property type="entry name" value="UPF0178"/>
    <property type="match status" value="1"/>
</dbReference>
<dbReference type="InterPro" id="IPR003791">
    <property type="entry name" value="UPF0178"/>
</dbReference>
<dbReference type="NCBIfam" id="NF001095">
    <property type="entry name" value="PRK00124.1"/>
    <property type="match status" value="1"/>
</dbReference>
<dbReference type="PANTHER" id="PTHR35146">
    <property type="entry name" value="UPF0178 PROTEIN YAII"/>
    <property type="match status" value="1"/>
</dbReference>
<dbReference type="PANTHER" id="PTHR35146:SF1">
    <property type="entry name" value="UPF0178 PROTEIN YAII"/>
    <property type="match status" value="1"/>
</dbReference>
<dbReference type="Pfam" id="PF02639">
    <property type="entry name" value="DUF188"/>
    <property type="match status" value="1"/>
</dbReference>
<name>YAII_ECOK1</name>
<evidence type="ECO:0000255" key="1">
    <source>
        <dbReference type="HAMAP-Rule" id="MF_00489"/>
    </source>
</evidence>
<protein>
    <recommendedName>
        <fullName evidence="1">UPF0178 protein YaiI</fullName>
    </recommendedName>
</protein>
<gene>
    <name evidence="1" type="primary">yaiI</name>
    <name type="ordered locus">Ecok1_03550</name>
    <name type="ORF">APECO1_1621</name>
</gene>
<accession>A1A859</accession>
<organism>
    <name type="scientific">Escherichia coli O1:K1 / APEC</name>
    <dbReference type="NCBI Taxonomy" id="405955"/>
    <lineage>
        <taxon>Bacteria</taxon>
        <taxon>Pseudomonadati</taxon>
        <taxon>Pseudomonadota</taxon>
        <taxon>Gammaproteobacteria</taxon>
        <taxon>Enterobacterales</taxon>
        <taxon>Enterobacteriaceae</taxon>
        <taxon>Escherichia</taxon>
    </lineage>
</organism>
<keyword id="KW-1185">Reference proteome</keyword>